<comment type="function">
    <text evidence="1 2">Required for efficient transcription initiation by RNA polymerase I (Pol I). Required for the formation of the competent pre-initiation complex (PIC).</text>
</comment>
<comment type="subunit">
    <text evidence="2">Part of Pol I pre-initiation complex (PIC), in which Pol I core assembles with RRN3 and promoter-bound UTBF and SL1/TIF-IB complex. Interacts with POLR1F, EIF3L, TAF1B and TAF1C.</text>
</comment>
<comment type="subcellular location">
    <subcellularLocation>
        <location evidence="2">Nucleus</location>
        <location evidence="2">Nucleolus</location>
    </subcellularLocation>
</comment>
<comment type="PTM">
    <text evidence="1">Phosphorylated at Thr-199 by MAPK9/JNK2, which abrogates initiation complex formation.</text>
</comment>
<comment type="similarity">
    <text evidence="4">Belongs to the RRN3 family.</text>
</comment>
<reference key="1">
    <citation type="submission" date="2004-11" db="EMBL/GenBank/DDBJ databases">
        <authorList>
            <consortium name="The German cDNA consortium"/>
        </authorList>
    </citation>
    <scope>NUCLEOTIDE SEQUENCE [LARGE SCALE MRNA]</scope>
    <source>
        <tissue>Brain cortex</tissue>
    </source>
</reference>
<feature type="chain" id="PRO_0000211427" description="RNA polymerase I-specific transcription initiation factor RRN3">
    <location>
        <begin position="1"/>
        <end position="650"/>
    </location>
</feature>
<feature type="region of interest" description="Interaction with POLR1F" evidence="1">
    <location>
        <begin position="499"/>
        <end position="650"/>
    </location>
</feature>
<feature type="region of interest" description="Interaction with EIF3L" evidence="1">
    <location>
        <begin position="556"/>
        <end position="650"/>
    </location>
</feature>
<feature type="region of interest" description="Disordered" evidence="3">
    <location>
        <begin position="630"/>
        <end position="650"/>
    </location>
</feature>
<feature type="compositionally biased region" description="Low complexity" evidence="3">
    <location>
        <begin position="632"/>
        <end position="642"/>
    </location>
</feature>
<feature type="modified residue" description="Phosphoserine" evidence="2">
    <location>
        <position position="169"/>
    </location>
</feature>
<feature type="modified residue" description="Phosphoserine" evidence="2">
    <location>
        <position position="171"/>
    </location>
</feature>
<feature type="modified residue" description="Phosphothreonine; by MAPK9" evidence="2">
    <location>
        <position position="199"/>
    </location>
</feature>
<feature type="modified residue" description="Phosphoserine" evidence="2">
    <location>
        <position position="639"/>
    </location>
</feature>
<dbReference type="EMBL" id="CR861206">
    <property type="protein sequence ID" value="CAH93277.1"/>
    <property type="molecule type" value="mRNA"/>
</dbReference>
<dbReference type="RefSeq" id="NP_001126928.1">
    <property type="nucleotide sequence ID" value="NM_001133456.1"/>
</dbReference>
<dbReference type="SMR" id="Q5R4N9"/>
<dbReference type="FunCoup" id="Q5R4N9">
    <property type="interactions" value="3034"/>
</dbReference>
<dbReference type="STRING" id="9601.ENSPPYP00000008059"/>
<dbReference type="GeneID" id="100173945"/>
<dbReference type="KEGG" id="pon:100173945"/>
<dbReference type="CTD" id="54700"/>
<dbReference type="eggNOG" id="KOG2434">
    <property type="taxonomic scope" value="Eukaryota"/>
</dbReference>
<dbReference type="InParanoid" id="Q5R4N9"/>
<dbReference type="OrthoDB" id="26970at2759"/>
<dbReference type="Proteomes" id="UP000001595">
    <property type="component" value="Unplaced"/>
</dbReference>
<dbReference type="GO" id="GO:0005730">
    <property type="term" value="C:nucleolus"/>
    <property type="evidence" value="ECO:0007669"/>
    <property type="project" value="UniProtKB-SubCell"/>
</dbReference>
<dbReference type="GO" id="GO:0001042">
    <property type="term" value="F:RNA polymerase I core binding"/>
    <property type="evidence" value="ECO:0007669"/>
    <property type="project" value="TreeGrafter"/>
</dbReference>
<dbReference type="GO" id="GO:0001181">
    <property type="term" value="F:RNA polymerase I general transcription initiation factor activity"/>
    <property type="evidence" value="ECO:0000250"/>
    <property type="project" value="UniProtKB"/>
</dbReference>
<dbReference type="GO" id="GO:0006361">
    <property type="term" value="P:transcription initiation at RNA polymerase I promoter"/>
    <property type="evidence" value="ECO:0000250"/>
    <property type="project" value="UniProtKB"/>
</dbReference>
<dbReference type="InterPro" id="IPR016024">
    <property type="entry name" value="ARM-type_fold"/>
</dbReference>
<dbReference type="InterPro" id="IPR007991">
    <property type="entry name" value="RNA_pol_I_trans_ini_fac_RRN3"/>
</dbReference>
<dbReference type="PANTHER" id="PTHR12790:SF0">
    <property type="entry name" value="RNA POLYMERASE I-SPECIFIC TRANSCRIPTION INITIATION FACTOR RRN3-RELATED"/>
    <property type="match status" value="1"/>
</dbReference>
<dbReference type="PANTHER" id="PTHR12790">
    <property type="entry name" value="TRANSCRIPTION INITIATION FACTOR IA RRN3"/>
    <property type="match status" value="1"/>
</dbReference>
<dbReference type="Pfam" id="PF05327">
    <property type="entry name" value="RRN3"/>
    <property type="match status" value="1"/>
</dbReference>
<dbReference type="SUPFAM" id="SSF48371">
    <property type="entry name" value="ARM repeat"/>
    <property type="match status" value="1"/>
</dbReference>
<name>RRN3_PONAB</name>
<organism>
    <name type="scientific">Pongo abelii</name>
    <name type="common">Sumatran orangutan</name>
    <name type="synonym">Pongo pygmaeus abelii</name>
    <dbReference type="NCBI Taxonomy" id="9601"/>
    <lineage>
        <taxon>Eukaryota</taxon>
        <taxon>Metazoa</taxon>
        <taxon>Chordata</taxon>
        <taxon>Craniata</taxon>
        <taxon>Vertebrata</taxon>
        <taxon>Euteleostomi</taxon>
        <taxon>Mammalia</taxon>
        <taxon>Eutheria</taxon>
        <taxon>Euarchontoglires</taxon>
        <taxon>Primates</taxon>
        <taxon>Haplorrhini</taxon>
        <taxon>Catarrhini</taxon>
        <taxon>Hominidae</taxon>
        <taxon>Pongo</taxon>
    </lineage>
</organism>
<accession>Q5R4N9</accession>
<proteinExistence type="evidence at transcript level"/>
<protein>
    <recommendedName>
        <fullName>RNA polymerase I-specific transcription initiation factor RRN3</fullName>
    </recommendedName>
</protein>
<sequence length="650" mass="73935">MAAPLLHTRLPGDAAASSSAVKTLGASRTGISNMRALENDFFSSPPRKTVRFGGTVTEVLLKYKKGETNDFELLKNQLLDPDIKDDQIISWLLEFRSSVMYLTKDFEQLISIILRLPWLKSQTVVEEYLAFLANLVSAQTVFLRPCLGMIASHFVPPRVIIKEGDVDVSDSDDEDDNLPANFDTCHRALQIIARYVPSTPWFLMPILVEKFPFVRKSERTLECYVHNLLRISVYFPTLRHEILELIIEKLLKLDVNASRQDIEDAEETATQTCGGTDSTEGLFNMDEDEETEHETKAGPERLDQMVHPVAECLDILMSLVLSYMKDVCYVDGQVDNGKTKDLYRDLINIFDKLLLSTHASCHVQFFMFYLCSFKLGFAEAFLEHLWKKLQDPSNPAIIRQAAGNYIGSFLARAKFIPLITVRSCLDLLVNWLHIYLNNQDSGTKAFCDVALHGPFYSACQAVFYTFVFRHKQLLSGNLKEGLRYLQSLNFEWIVMSQLNPLKICLPSVVNFFAAITNKYQLVFCYTIIERNNRQMLPVIRSTAGGDSVQTCTNPLDTFFPFDPCVLKRSKKFIDPIYQVWEDMSAEELQEFKKPMRKEIVEDEDDDFLKGEVPQNDTVIGITPSSFDAHFRSPSSSVGSPPVLYMQPSPL</sequence>
<keyword id="KW-0539">Nucleus</keyword>
<keyword id="KW-0597">Phosphoprotein</keyword>
<keyword id="KW-1185">Reference proteome</keyword>
<keyword id="KW-0804">Transcription</keyword>
<keyword id="KW-0805">Transcription regulation</keyword>
<evidence type="ECO:0000250" key="1"/>
<evidence type="ECO:0000250" key="2">
    <source>
        <dbReference type="UniProtKB" id="Q9NYV6"/>
    </source>
</evidence>
<evidence type="ECO:0000256" key="3">
    <source>
        <dbReference type="SAM" id="MobiDB-lite"/>
    </source>
</evidence>
<evidence type="ECO:0000305" key="4"/>
<gene>
    <name type="primary">RRN3</name>
</gene>